<reference evidence="8" key="1">
    <citation type="journal article" date="2010" name="J. Proteome Res.">
        <title>Extensive de novo sequencing of new parvalbumin isoforms using a novel combination of bottom-up proteomics, accurate molecular mass measurement by FTICR-MS, and selected MS/MS ion monitoring.</title>
        <authorList>
            <person name="Carrera M."/>
            <person name="Canas B."/>
            <person name="Vazquez J."/>
            <person name="Gallardo J.M."/>
        </authorList>
    </citation>
    <scope>PROTEIN SEQUENCE</scope>
    <source>
        <tissue evidence="6">Muscle</tissue>
    </source>
</reference>
<keyword id="KW-0020">Allergen</keyword>
<keyword id="KW-0106">Calcium</keyword>
<keyword id="KW-0903">Direct protein sequencing</keyword>
<keyword id="KW-0479">Metal-binding</keyword>
<keyword id="KW-0514">Muscle protein</keyword>
<keyword id="KW-0677">Repeat</keyword>
<comment type="function">
    <text evidence="2 3">In muscle, parvalbumin is thought to be involved in relaxation after contraction. It binds two calcium ions (By similarity).</text>
</comment>
<comment type="miscellaneous">
    <text evidence="2 6">Is regarded as an important allergen.</text>
</comment>
<comment type="miscellaneous">
    <text evidence="6">On the 2D-gel the determined pI of this protein is: 3.75, its MW is: 11.35 kDa.</text>
</comment>
<comment type="similarity">
    <text evidence="4">Belongs to the parvalbumin family.</text>
</comment>
<dbReference type="SMR" id="P86742"/>
<dbReference type="GO" id="GO:0005737">
    <property type="term" value="C:cytoplasm"/>
    <property type="evidence" value="ECO:0007669"/>
    <property type="project" value="TreeGrafter"/>
</dbReference>
<dbReference type="GO" id="GO:0005509">
    <property type="term" value="F:calcium ion binding"/>
    <property type="evidence" value="ECO:0007669"/>
    <property type="project" value="InterPro"/>
</dbReference>
<dbReference type="Gene3D" id="1.10.238.10">
    <property type="entry name" value="EF-hand"/>
    <property type="match status" value="1"/>
</dbReference>
<dbReference type="InterPro" id="IPR011992">
    <property type="entry name" value="EF-hand-dom_pair"/>
</dbReference>
<dbReference type="InterPro" id="IPR018247">
    <property type="entry name" value="EF_Hand_1_Ca_BS"/>
</dbReference>
<dbReference type="InterPro" id="IPR002048">
    <property type="entry name" value="EF_hand_dom"/>
</dbReference>
<dbReference type="InterPro" id="IPR008080">
    <property type="entry name" value="Parvalbumin"/>
</dbReference>
<dbReference type="PANTHER" id="PTHR11653:SF12">
    <property type="entry name" value="PARVALBUMIN"/>
    <property type="match status" value="1"/>
</dbReference>
<dbReference type="PANTHER" id="PTHR11653">
    <property type="entry name" value="PARVALBUMIN ALPHA"/>
    <property type="match status" value="1"/>
</dbReference>
<dbReference type="Pfam" id="PF13499">
    <property type="entry name" value="EF-hand_7"/>
    <property type="match status" value="1"/>
</dbReference>
<dbReference type="PRINTS" id="PR01697">
    <property type="entry name" value="PARVALBUMIN"/>
</dbReference>
<dbReference type="SMART" id="SM00054">
    <property type="entry name" value="EFh"/>
    <property type="match status" value="2"/>
</dbReference>
<dbReference type="SUPFAM" id="SSF47473">
    <property type="entry name" value="EF-hand"/>
    <property type="match status" value="1"/>
</dbReference>
<dbReference type="PROSITE" id="PS00018">
    <property type="entry name" value="EF_HAND_1"/>
    <property type="match status" value="2"/>
</dbReference>
<dbReference type="PROSITE" id="PS50222">
    <property type="entry name" value="EF_HAND_2"/>
    <property type="match status" value="2"/>
</dbReference>
<proteinExistence type="evidence at protein level"/>
<sequence>SFNYKTFFKLAAKSNDDVKKAFFVIDQDKSGFIEEDELKLFLQNFSAGARALTAGETKTFLAAGDSDGDGMIGVDEFQALVKA</sequence>
<feature type="chain" id="PRO_0000399404" description="Parvalbumin beta 3">
    <location>
        <begin position="1" status="less than"/>
        <end position="83" status="greater than"/>
    </location>
</feature>
<feature type="domain" description="EF-hand 1" evidence="5">
    <location>
        <begin position="13"/>
        <end position="48"/>
    </location>
</feature>
<feature type="domain" description="EF-hand 2" evidence="5">
    <location>
        <begin position="52"/>
        <end position="83"/>
    </location>
</feature>
<feature type="binding site" evidence="1 5">
    <location>
        <position position="26"/>
    </location>
    <ligand>
        <name>Ca(2+)</name>
        <dbReference type="ChEBI" id="CHEBI:29108"/>
        <label>1</label>
    </ligand>
</feature>
<feature type="binding site" evidence="1 5">
    <location>
        <position position="28"/>
    </location>
    <ligand>
        <name>Ca(2+)</name>
        <dbReference type="ChEBI" id="CHEBI:29108"/>
        <label>1</label>
    </ligand>
</feature>
<feature type="binding site" evidence="1 5">
    <location>
        <position position="30"/>
    </location>
    <ligand>
        <name>Ca(2+)</name>
        <dbReference type="ChEBI" id="CHEBI:29108"/>
        <label>1</label>
    </ligand>
</feature>
<feature type="binding site" evidence="1">
    <location>
        <position position="32"/>
    </location>
    <ligand>
        <name>Ca(2+)</name>
        <dbReference type="ChEBI" id="CHEBI:29108"/>
        <label>1</label>
    </ligand>
</feature>
<feature type="binding site" evidence="1">
    <location>
        <position position="34"/>
    </location>
    <ligand>
        <name>Ca(2+)</name>
        <dbReference type="ChEBI" id="CHEBI:29108"/>
        <label>1</label>
    </ligand>
</feature>
<feature type="binding site" evidence="1 5">
    <location>
        <position position="37"/>
    </location>
    <ligand>
        <name>Ca(2+)</name>
        <dbReference type="ChEBI" id="CHEBI:29108"/>
        <label>1</label>
    </ligand>
</feature>
<feature type="binding site" evidence="1 5">
    <location>
        <position position="65"/>
    </location>
    <ligand>
        <name>Ca(2+)</name>
        <dbReference type="ChEBI" id="CHEBI:29108"/>
        <label>2</label>
    </ligand>
</feature>
<feature type="binding site" evidence="1 5">
    <location>
        <position position="67"/>
    </location>
    <ligand>
        <name>Ca(2+)</name>
        <dbReference type="ChEBI" id="CHEBI:29108"/>
        <label>2</label>
    </ligand>
</feature>
<feature type="binding site" evidence="1 5">
    <location>
        <position position="69"/>
    </location>
    <ligand>
        <name>Ca(2+)</name>
        <dbReference type="ChEBI" id="CHEBI:29108"/>
        <label>2</label>
    </ligand>
</feature>
<feature type="binding site" evidence="5">
    <location>
        <position position="71"/>
    </location>
    <ligand>
        <name>Ca(2+)</name>
        <dbReference type="ChEBI" id="CHEBI:29108"/>
        <label>2</label>
    </ligand>
</feature>
<feature type="binding site" evidence="1 5">
    <location>
        <position position="76"/>
    </location>
    <ligand>
        <name>Ca(2+)</name>
        <dbReference type="ChEBI" id="CHEBI:29108"/>
        <label>2</label>
    </ligand>
</feature>
<feature type="unsure residue" description="K or Q" evidence="6">
    <location>
        <position position="5"/>
    </location>
</feature>
<feature type="unsure residue" description="K or Q" evidence="6">
    <location>
        <position position="9"/>
    </location>
</feature>
<feature type="unsure residue" description="L or I" evidence="6">
    <location>
        <position position="10"/>
    </location>
</feature>
<feature type="unsure residue" description="K or Q" evidence="6">
    <location>
        <position position="13"/>
    </location>
</feature>
<feature type="unsure residue" description="K or Q" evidence="6">
    <location>
        <position position="19"/>
    </location>
</feature>
<feature type="unsure residue" description="K or Q" evidence="6">
    <location>
        <position position="20"/>
    </location>
</feature>
<feature type="unsure residue" description="I or L" evidence="6">
    <location>
        <position position="25"/>
    </location>
</feature>
<feature type="unsure residue" description="Q or K" evidence="6">
    <location>
        <position position="27"/>
    </location>
</feature>
<feature type="unsure residue" description="K or Q" evidence="6">
    <location>
        <position position="29"/>
    </location>
</feature>
<feature type="unsure residue" description="I or L" evidence="6">
    <location>
        <position position="33"/>
    </location>
</feature>
<feature type="unsure residue" description="L or I" evidence="6">
    <location>
        <position position="38"/>
    </location>
</feature>
<feature type="unsure residue" description="K or Q" evidence="6">
    <location>
        <position position="39"/>
    </location>
</feature>
<feature type="unsure residue" description="L or I" evidence="6">
    <location>
        <position position="40"/>
    </location>
</feature>
<feature type="unsure residue" description="L or I" evidence="6">
    <location>
        <position position="42"/>
    </location>
</feature>
<feature type="unsure residue" description="Q or K" evidence="6">
    <location>
        <position position="43"/>
    </location>
</feature>
<feature type="unsure residue" description="L or I" evidence="6">
    <location>
        <position position="52"/>
    </location>
</feature>
<feature type="unsure residue" description="K or Q" evidence="6">
    <location>
        <position position="58"/>
    </location>
</feature>
<feature type="unsure residue" description="L or I" evidence="6">
    <location>
        <position position="61"/>
    </location>
</feature>
<feature type="unsure residue" description="I or L" evidence="6">
    <location>
        <position position="72"/>
    </location>
</feature>
<feature type="unsure residue" description="Q or K" evidence="6">
    <location>
        <position position="78"/>
    </location>
</feature>
<feature type="unsure residue" description="L or I" evidence="6">
    <location>
        <position position="80"/>
    </location>
</feature>
<feature type="unsure residue" description="K or Q" evidence="6">
    <location>
        <position position="82"/>
    </location>
</feature>
<feature type="non-consecutive residues" evidence="7">
    <location>
        <begin position="9"/>
        <end position="10"/>
    </location>
</feature>
<feature type="non-terminal residue" evidence="7">
    <location>
        <position position="1"/>
    </location>
</feature>
<feature type="non-terminal residue" evidence="7">
    <location>
        <position position="83"/>
    </location>
</feature>
<protein>
    <recommendedName>
        <fullName evidence="7">Parvalbumin beta 3</fullName>
    </recommendedName>
</protein>
<accession>P86742</accession>
<evidence type="ECO:0000250" key="1">
    <source>
        <dbReference type="UniProtKB" id="P02621"/>
    </source>
</evidence>
<evidence type="ECO:0000250" key="2">
    <source>
        <dbReference type="UniProtKB" id="P02622"/>
    </source>
</evidence>
<evidence type="ECO:0000250" key="3">
    <source>
        <dbReference type="UniProtKB" id="P02624"/>
    </source>
</evidence>
<evidence type="ECO:0000255" key="4"/>
<evidence type="ECO:0000255" key="5">
    <source>
        <dbReference type="PROSITE-ProRule" id="PRU00448"/>
    </source>
</evidence>
<evidence type="ECO:0000269" key="6">
    <source>
    </source>
</evidence>
<evidence type="ECO:0000303" key="7">
    <source>
    </source>
</evidence>
<evidence type="ECO:0000305" key="8"/>
<organism>
    <name type="scientific">Macruronus novaezelandiae</name>
    <name type="common">Blue grenadier</name>
    <name type="synonym">Macruronus novaezelandiae novaezelandiae</name>
    <dbReference type="NCBI Taxonomy" id="248764"/>
    <lineage>
        <taxon>Eukaryota</taxon>
        <taxon>Metazoa</taxon>
        <taxon>Chordata</taxon>
        <taxon>Craniata</taxon>
        <taxon>Vertebrata</taxon>
        <taxon>Euteleostomi</taxon>
        <taxon>Actinopterygii</taxon>
        <taxon>Neopterygii</taxon>
        <taxon>Teleostei</taxon>
        <taxon>Neoteleostei</taxon>
        <taxon>Acanthomorphata</taxon>
        <taxon>Zeiogadaria</taxon>
        <taxon>Gadariae</taxon>
        <taxon>Gadiformes</taxon>
        <taxon>Gadoidei</taxon>
        <taxon>Merlucciidae</taxon>
        <taxon>Macruronus</taxon>
    </lineage>
</organism>
<name>PRVB3_MACNO</name>